<gene>
    <name type="ordered locus">Sama_0252</name>
</gene>
<sequence length="424" mass="45937">MKLEMICTGEEVLAGQIVDTNAAWFANLMMENGIEVQRRVTVGDRLEDLVAVFQERSLHADVILVNGGLGPTSDDMSAEAMAKAKGESLVENAEWAERLHDWFTRHGREMPKSNIKQAWLPESAVMVDNPVGTACGFRVKLNRAWLFFTPGVPFEFKQMVEEQFLPFVKATFDAGSQVALRKLLTLGRGESSLADELEAMALPAGITLGYRSFMPYIEIKVFARGVEAIKALGAVTDEIAARLGNVVVAHNRTSLEEEIHARLNNSGISLSVAESCTGGLITSQLVGFPGSSSYLHQGLVTYSNESKVRVLGVSPQTLDDYGAVSIQTVEEMAKGARAILDSDFALATSGIAGPDGGTEEKPVGTVAIALATKGGVYSQMVKLPRRSRDMVRKVSAAVAYDMLRRELNGEAVIVDYSSISRYPK</sequence>
<evidence type="ECO:0000255" key="1">
    <source>
        <dbReference type="HAMAP-Rule" id="MF_00226"/>
    </source>
</evidence>
<organism>
    <name type="scientific">Shewanella amazonensis (strain ATCC BAA-1098 / SB2B)</name>
    <dbReference type="NCBI Taxonomy" id="326297"/>
    <lineage>
        <taxon>Bacteria</taxon>
        <taxon>Pseudomonadati</taxon>
        <taxon>Pseudomonadota</taxon>
        <taxon>Gammaproteobacteria</taxon>
        <taxon>Alteromonadales</taxon>
        <taxon>Shewanellaceae</taxon>
        <taxon>Shewanella</taxon>
    </lineage>
</organism>
<comment type="similarity">
    <text evidence="1">Belongs to the CinA family.</text>
</comment>
<proteinExistence type="inferred from homology"/>
<protein>
    <recommendedName>
        <fullName evidence="1">CinA-like protein</fullName>
    </recommendedName>
</protein>
<feature type="chain" id="PRO_1000071774" description="CinA-like protein">
    <location>
        <begin position="1"/>
        <end position="424"/>
    </location>
</feature>
<dbReference type="EMBL" id="CP000507">
    <property type="protein sequence ID" value="ABL98463.1"/>
    <property type="molecule type" value="Genomic_DNA"/>
</dbReference>
<dbReference type="RefSeq" id="WP_011758373.1">
    <property type="nucleotide sequence ID" value="NC_008700.1"/>
</dbReference>
<dbReference type="SMR" id="A1S257"/>
<dbReference type="STRING" id="326297.Sama_0252"/>
<dbReference type="KEGG" id="saz:Sama_0252"/>
<dbReference type="eggNOG" id="COG1058">
    <property type="taxonomic scope" value="Bacteria"/>
</dbReference>
<dbReference type="eggNOG" id="COG1546">
    <property type="taxonomic scope" value="Bacteria"/>
</dbReference>
<dbReference type="HOGENOM" id="CLU_030805_9_2_6"/>
<dbReference type="OrthoDB" id="9801454at2"/>
<dbReference type="Proteomes" id="UP000009175">
    <property type="component" value="Chromosome"/>
</dbReference>
<dbReference type="CDD" id="cd00885">
    <property type="entry name" value="cinA"/>
    <property type="match status" value="1"/>
</dbReference>
<dbReference type="Gene3D" id="3.90.950.20">
    <property type="entry name" value="CinA-like"/>
    <property type="match status" value="1"/>
</dbReference>
<dbReference type="Gene3D" id="3.40.980.10">
    <property type="entry name" value="MoaB/Mog-like domain"/>
    <property type="match status" value="1"/>
</dbReference>
<dbReference type="HAMAP" id="MF_00226_B">
    <property type="entry name" value="CinA_B"/>
    <property type="match status" value="1"/>
</dbReference>
<dbReference type="InterPro" id="IPR050101">
    <property type="entry name" value="CinA"/>
</dbReference>
<dbReference type="InterPro" id="IPR036653">
    <property type="entry name" value="CinA-like_C"/>
</dbReference>
<dbReference type="InterPro" id="IPR008136">
    <property type="entry name" value="CinA_C"/>
</dbReference>
<dbReference type="InterPro" id="IPR008135">
    <property type="entry name" value="Competence-induced_CinA"/>
</dbReference>
<dbReference type="InterPro" id="IPR036425">
    <property type="entry name" value="MoaB/Mog-like_dom_sf"/>
</dbReference>
<dbReference type="InterPro" id="IPR001453">
    <property type="entry name" value="MoaB/Mog_dom"/>
</dbReference>
<dbReference type="NCBIfam" id="TIGR00200">
    <property type="entry name" value="cinA_nterm"/>
    <property type="match status" value="1"/>
</dbReference>
<dbReference type="NCBIfam" id="TIGR00177">
    <property type="entry name" value="molyb_syn"/>
    <property type="match status" value="1"/>
</dbReference>
<dbReference type="NCBIfam" id="TIGR00199">
    <property type="entry name" value="PncC_domain"/>
    <property type="match status" value="1"/>
</dbReference>
<dbReference type="PANTHER" id="PTHR13939">
    <property type="entry name" value="NICOTINAMIDE-NUCLEOTIDE AMIDOHYDROLASE PNCC"/>
    <property type="match status" value="1"/>
</dbReference>
<dbReference type="PANTHER" id="PTHR13939:SF0">
    <property type="entry name" value="NMN AMIDOHYDROLASE-LIKE PROTEIN YFAY"/>
    <property type="match status" value="1"/>
</dbReference>
<dbReference type="Pfam" id="PF02464">
    <property type="entry name" value="CinA"/>
    <property type="match status" value="1"/>
</dbReference>
<dbReference type="Pfam" id="PF00994">
    <property type="entry name" value="MoCF_biosynth"/>
    <property type="match status" value="1"/>
</dbReference>
<dbReference type="PIRSF" id="PIRSF006728">
    <property type="entry name" value="CinA"/>
    <property type="match status" value="1"/>
</dbReference>
<dbReference type="SMART" id="SM00852">
    <property type="entry name" value="MoCF_biosynth"/>
    <property type="match status" value="1"/>
</dbReference>
<dbReference type="SUPFAM" id="SSF142433">
    <property type="entry name" value="CinA-like"/>
    <property type="match status" value="1"/>
</dbReference>
<dbReference type="SUPFAM" id="SSF53218">
    <property type="entry name" value="Molybdenum cofactor biosynthesis proteins"/>
    <property type="match status" value="1"/>
</dbReference>
<reference key="1">
    <citation type="submission" date="2006-12" db="EMBL/GenBank/DDBJ databases">
        <title>Complete sequence of Shewanella amazonensis SB2B.</title>
        <authorList>
            <consortium name="US DOE Joint Genome Institute"/>
            <person name="Copeland A."/>
            <person name="Lucas S."/>
            <person name="Lapidus A."/>
            <person name="Barry K."/>
            <person name="Detter J.C."/>
            <person name="Glavina del Rio T."/>
            <person name="Hammon N."/>
            <person name="Israni S."/>
            <person name="Dalin E."/>
            <person name="Tice H."/>
            <person name="Pitluck S."/>
            <person name="Munk A.C."/>
            <person name="Brettin T."/>
            <person name="Bruce D."/>
            <person name="Han C."/>
            <person name="Tapia R."/>
            <person name="Gilna P."/>
            <person name="Schmutz J."/>
            <person name="Larimer F."/>
            <person name="Land M."/>
            <person name="Hauser L."/>
            <person name="Kyrpides N."/>
            <person name="Mikhailova N."/>
            <person name="Fredrickson J."/>
            <person name="Richardson P."/>
        </authorList>
    </citation>
    <scope>NUCLEOTIDE SEQUENCE [LARGE SCALE GENOMIC DNA]</scope>
    <source>
        <strain>ATCC BAA-1098 / SB2B</strain>
    </source>
</reference>
<name>CINAL_SHEAM</name>
<accession>A1S257</accession>
<keyword id="KW-1185">Reference proteome</keyword>